<protein>
    <recommendedName>
        <fullName evidence="1">Small ribosomal subunit protein uS14</fullName>
    </recommendedName>
    <alternativeName>
        <fullName evidence="2">30S ribosomal protein S14</fullName>
    </alternativeName>
</protein>
<evidence type="ECO:0000255" key="1">
    <source>
        <dbReference type="HAMAP-Rule" id="MF_00537"/>
    </source>
</evidence>
<evidence type="ECO:0000305" key="2"/>
<proteinExistence type="inferred from homology"/>
<sequence length="101" mass="11373">MAKKSMKNRELKRQLTVAKFAKKRAELKATIVNVNASPEERFAAVVALQKQPRDASAARLRNRCRLTGRPHGVYRKFGLGRNMLRQAAMRGDVPGLVKASW</sequence>
<feature type="chain" id="PRO_1000128518" description="Small ribosomal subunit protein uS14">
    <location>
        <begin position="1"/>
        <end position="101"/>
    </location>
</feature>
<keyword id="KW-0687">Ribonucleoprotein</keyword>
<keyword id="KW-0689">Ribosomal protein</keyword>
<keyword id="KW-0694">RNA-binding</keyword>
<keyword id="KW-0699">rRNA-binding</keyword>
<comment type="function">
    <text evidence="1">Binds 16S rRNA, required for the assembly of 30S particles and may also be responsible for determining the conformation of the 16S rRNA at the A site.</text>
</comment>
<comment type="subunit">
    <text evidence="1">Part of the 30S ribosomal subunit. Contacts proteins S3 and S10.</text>
</comment>
<comment type="similarity">
    <text evidence="1">Belongs to the universal ribosomal protein uS14 family.</text>
</comment>
<dbReference type="EMBL" id="CP000926">
    <property type="protein sequence ID" value="ABY96408.1"/>
    <property type="molecule type" value="Genomic_DNA"/>
</dbReference>
<dbReference type="RefSeq" id="WP_008089807.1">
    <property type="nucleotide sequence ID" value="NC_010322.1"/>
</dbReference>
<dbReference type="SMR" id="B0KK80"/>
<dbReference type="GeneID" id="49614403"/>
<dbReference type="KEGG" id="ppg:PputGB1_0497"/>
<dbReference type="eggNOG" id="COG0199">
    <property type="taxonomic scope" value="Bacteria"/>
</dbReference>
<dbReference type="HOGENOM" id="CLU_139869_0_1_6"/>
<dbReference type="Proteomes" id="UP000002157">
    <property type="component" value="Chromosome"/>
</dbReference>
<dbReference type="GO" id="GO:0005737">
    <property type="term" value="C:cytoplasm"/>
    <property type="evidence" value="ECO:0007669"/>
    <property type="project" value="UniProtKB-ARBA"/>
</dbReference>
<dbReference type="GO" id="GO:0015935">
    <property type="term" value="C:small ribosomal subunit"/>
    <property type="evidence" value="ECO:0007669"/>
    <property type="project" value="TreeGrafter"/>
</dbReference>
<dbReference type="GO" id="GO:0019843">
    <property type="term" value="F:rRNA binding"/>
    <property type="evidence" value="ECO:0007669"/>
    <property type="project" value="UniProtKB-UniRule"/>
</dbReference>
<dbReference type="GO" id="GO:0003735">
    <property type="term" value="F:structural constituent of ribosome"/>
    <property type="evidence" value="ECO:0007669"/>
    <property type="project" value="InterPro"/>
</dbReference>
<dbReference type="GO" id="GO:0006412">
    <property type="term" value="P:translation"/>
    <property type="evidence" value="ECO:0007669"/>
    <property type="project" value="UniProtKB-UniRule"/>
</dbReference>
<dbReference type="FunFam" id="1.10.287.1480:FF:000001">
    <property type="entry name" value="30S ribosomal protein S14"/>
    <property type="match status" value="1"/>
</dbReference>
<dbReference type="Gene3D" id="1.10.287.1480">
    <property type="match status" value="1"/>
</dbReference>
<dbReference type="HAMAP" id="MF_00537">
    <property type="entry name" value="Ribosomal_uS14_1"/>
    <property type="match status" value="1"/>
</dbReference>
<dbReference type="InterPro" id="IPR001209">
    <property type="entry name" value="Ribosomal_uS14"/>
</dbReference>
<dbReference type="InterPro" id="IPR023036">
    <property type="entry name" value="Ribosomal_uS14_bac/plastid"/>
</dbReference>
<dbReference type="NCBIfam" id="NF006477">
    <property type="entry name" value="PRK08881.1"/>
    <property type="match status" value="1"/>
</dbReference>
<dbReference type="PANTHER" id="PTHR19836">
    <property type="entry name" value="30S RIBOSOMAL PROTEIN S14"/>
    <property type="match status" value="1"/>
</dbReference>
<dbReference type="PANTHER" id="PTHR19836:SF19">
    <property type="entry name" value="SMALL RIBOSOMAL SUBUNIT PROTEIN US14M"/>
    <property type="match status" value="1"/>
</dbReference>
<dbReference type="Pfam" id="PF00253">
    <property type="entry name" value="Ribosomal_S14"/>
    <property type="match status" value="1"/>
</dbReference>
<dbReference type="SUPFAM" id="SSF57716">
    <property type="entry name" value="Glucocorticoid receptor-like (DNA-binding domain)"/>
    <property type="match status" value="1"/>
</dbReference>
<gene>
    <name evidence="1" type="primary">rpsN</name>
    <name type="ordered locus">PputGB1_0497</name>
</gene>
<organism>
    <name type="scientific">Pseudomonas putida (strain GB-1)</name>
    <dbReference type="NCBI Taxonomy" id="76869"/>
    <lineage>
        <taxon>Bacteria</taxon>
        <taxon>Pseudomonadati</taxon>
        <taxon>Pseudomonadota</taxon>
        <taxon>Gammaproteobacteria</taxon>
        <taxon>Pseudomonadales</taxon>
        <taxon>Pseudomonadaceae</taxon>
        <taxon>Pseudomonas</taxon>
    </lineage>
</organism>
<name>RS14_PSEPG</name>
<accession>B0KK80</accession>
<reference key="1">
    <citation type="submission" date="2008-01" db="EMBL/GenBank/DDBJ databases">
        <title>Complete sequence of Pseudomonas putida GB-1.</title>
        <authorList>
            <consortium name="US DOE Joint Genome Institute"/>
            <person name="Copeland A."/>
            <person name="Lucas S."/>
            <person name="Lapidus A."/>
            <person name="Barry K."/>
            <person name="Glavina del Rio T."/>
            <person name="Dalin E."/>
            <person name="Tice H."/>
            <person name="Pitluck S."/>
            <person name="Bruce D."/>
            <person name="Goodwin L."/>
            <person name="Chertkov O."/>
            <person name="Brettin T."/>
            <person name="Detter J.C."/>
            <person name="Han C."/>
            <person name="Kuske C.R."/>
            <person name="Schmutz J."/>
            <person name="Larimer F."/>
            <person name="Land M."/>
            <person name="Hauser L."/>
            <person name="Kyrpides N."/>
            <person name="Kim E."/>
            <person name="McCarthy J.K."/>
            <person name="Richardson P."/>
        </authorList>
    </citation>
    <scope>NUCLEOTIDE SEQUENCE [LARGE SCALE GENOMIC DNA]</scope>
    <source>
        <strain>GB-1</strain>
    </source>
</reference>